<gene>
    <name evidence="1 4" type="primary">codY</name>
    <name type="ordered locus">SPD_1412</name>
</gene>
<organism>
    <name type="scientific">Streptococcus pneumoniae serotype 2 (strain D39 / NCTC 7466)</name>
    <dbReference type="NCBI Taxonomy" id="373153"/>
    <lineage>
        <taxon>Bacteria</taxon>
        <taxon>Bacillati</taxon>
        <taxon>Bacillota</taxon>
        <taxon>Bacilli</taxon>
        <taxon>Lactobacillales</taxon>
        <taxon>Streptococcaceae</taxon>
        <taxon>Streptococcus</taxon>
    </lineage>
</organism>
<protein>
    <recommendedName>
        <fullName evidence="1 5">Global transcriptional regulator CodY</fullName>
    </recommendedName>
    <alternativeName>
        <fullName evidence="4">Global nutritional regulator CodY</fullName>
    </alternativeName>
</protein>
<sequence length="262" mass="29756">MAHLLEKTRKITSILKRSEEQLQDELPYNAITRQLADIIHCNACIINSKGRLLGYFMRYKTNTDRVEQFFQTKIFPDDYVQGANMIYETEANLPVEHDMSIFPVESRDDFPDGLTTIAPIHVSGIRLGSLIIWRNDKKFEDEDLVLVEIASTVVGIQLLNFQREEDEKNIRRRTAVTMAVNTLSYSELRAVSAILGELNGNEGQLTASVIADRIGITRSVIVNALRKLESAGIIESRSLGMKGTYLKVLISDIFEEVKKRDY</sequence>
<keyword id="KW-0963">Cytoplasm</keyword>
<keyword id="KW-0238">DNA-binding</keyword>
<keyword id="KW-1185">Reference proteome</keyword>
<keyword id="KW-0678">Repressor</keyword>
<keyword id="KW-0804">Transcription</keyword>
<keyword id="KW-0805">Transcription regulation</keyword>
<reference key="1">
    <citation type="journal article" date="2007" name="J. Bacteriol.">
        <title>Genome sequence of Avery's virulent serotype 2 strain D39 of Streptococcus pneumoniae and comparison with that of unencapsulated laboratory strain R6.</title>
        <authorList>
            <person name="Lanie J.A."/>
            <person name="Ng W.-L."/>
            <person name="Kazmierczak K.M."/>
            <person name="Andrzejewski T.M."/>
            <person name="Davidsen T.M."/>
            <person name="Wayne K.J."/>
            <person name="Tettelin H."/>
            <person name="Glass J.I."/>
            <person name="Winkler M.E."/>
        </authorList>
    </citation>
    <scope>NUCLEOTIDE SEQUENCE [LARGE SCALE GENOMIC DNA]</scope>
    <source>
        <strain>D39 / NCTC 7466</strain>
    </source>
</reference>
<reference key="2">
    <citation type="journal article" date="2008" name="J. Bacteriol.">
        <title>CodY of Streptococcus pneumoniae: link between nutritional gene regulation and colonization.</title>
        <authorList>
            <person name="Hendriksen W.T."/>
            <person name="Bootsma H.J."/>
            <person name="Estevao S."/>
            <person name="Hoogenboezem T."/>
            <person name="de Jong A."/>
            <person name="de Groot R."/>
            <person name="Kuipers O.P."/>
            <person name="Hermans P.W."/>
        </authorList>
    </citation>
    <scope>FUNCTION</scope>
    <scope>DNA-BINDING</scope>
    <scope>ACTIVITY REGULATION</scope>
    <source>
        <strain>D39 / NCTC 7466</strain>
    </source>
</reference>
<reference key="3">
    <citation type="journal article" date="2010" name="Mol. Microbiol.">
        <title>The global nutritional regulator CodY is an essential protein in the human pathogen Streptococcus pneumoniae.</title>
        <authorList>
            <person name="Caymaris S."/>
            <person name="Bootsma H.J."/>
            <person name="Martin B."/>
            <person name="Hermans P.W."/>
            <person name="Prudhomme M."/>
            <person name="Claverys J.P."/>
        </authorList>
    </citation>
    <scope>DISRUPTION PHENOTYPE</scope>
    <source>
        <strain>ATCC BAA-255 / R6</strain>
        <strain>D39 / NCTC 7466</strain>
    </source>
</reference>
<proteinExistence type="evidence at protein level"/>
<dbReference type="EMBL" id="CP000410">
    <property type="protein sequence ID" value="ABJ54045.1"/>
    <property type="molecule type" value="Genomic_DNA"/>
</dbReference>
<dbReference type="RefSeq" id="WP_000940734.1">
    <property type="nucleotide sequence ID" value="NZ_JAMLJR010000008.1"/>
</dbReference>
<dbReference type="SMR" id="Q04JG7"/>
<dbReference type="PaxDb" id="373153-SPD_1412"/>
<dbReference type="KEGG" id="spd:SPD_1412"/>
<dbReference type="eggNOG" id="COG4465">
    <property type="taxonomic scope" value="Bacteria"/>
</dbReference>
<dbReference type="HOGENOM" id="CLU_089581_0_0_9"/>
<dbReference type="BioCyc" id="SPNE373153:G1G6V-1519-MONOMER"/>
<dbReference type="Proteomes" id="UP000001452">
    <property type="component" value="Chromosome"/>
</dbReference>
<dbReference type="GO" id="GO:0005737">
    <property type="term" value="C:cytoplasm"/>
    <property type="evidence" value="ECO:0007669"/>
    <property type="project" value="UniProtKB-SubCell"/>
</dbReference>
<dbReference type="GO" id="GO:0003677">
    <property type="term" value="F:DNA binding"/>
    <property type="evidence" value="ECO:0007669"/>
    <property type="project" value="UniProtKB-UniRule"/>
</dbReference>
<dbReference type="GO" id="GO:0003700">
    <property type="term" value="F:DNA-binding transcription factor activity"/>
    <property type="evidence" value="ECO:0007669"/>
    <property type="project" value="InterPro"/>
</dbReference>
<dbReference type="GO" id="GO:0005525">
    <property type="term" value="F:GTP binding"/>
    <property type="evidence" value="ECO:0007669"/>
    <property type="project" value="InterPro"/>
</dbReference>
<dbReference type="GO" id="GO:0045892">
    <property type="term" value="P:negative regulation of DNA-templated transcription"/>
    <property type="evidence" value="ECO:0007669"/>
    <property type="project" value="UniProtKB-UniRule"/>
</dbReference>
<dbReference type="CDD" id="cd00090">
    <property type="entry name" value="HTH_ARSR"/>
    <property type="match status" value="1"/>
</dbReference>
<dbReference type="FunFam" id="1.10.10.10:FF:000034">
    <property type="entry name" value="GTP-sensing transcriptional pleiotropic repressor CodY"/>
    <property type="match status" value="1"/>
</dbReference>
<dbReference type="FunFam" id="3.30.450.40:FF:000003">
    <property type="entry name" value="GTP-sensing transcriptional pleiotropic repressor CodY"/>
    <property type="match status" value="1"/>
</dbReference>
<dbReference type="Gene3D" id="3.30.450.40">
    <property type="match status" value="1"/>
</dbReference>
<dbReference type="Gene3D" id="1.10.10.10">
    <property type="entry name" value="Winged helix-like DNA-binding domain superfamily/Winged helix DNA-binding domain"/>
    <property type="match status" value="1"/>
</dbReference>
<dbReference type="HAMAP" id="MF_00621">
    <property type="entry name" value="HTH_type_CodY"/>
    <property type="match status" value="1"/>
</dbReference>
<dbReference type="InterPro" id="IPR011991">
    <property type="entry name" value="ArsR-like_HTH"/>
</dbReference>
<dbReference type="InterPro" id="IPR014154">
    <property type="entry name" value="CodY"/>
</dbReference>
<dbReference type="InterPro" id="IPR029016">
    <property type="entry name" value="GAF-like_dom_sf"/>
</dbReference>
<dbReference type="InterPro" id="IPR013198">
    <property type="entry name" value="GTP_trans_reg_CodY_C"/>
</dbReference>
<dbReference type="InterPro" id="IPR010312">
    <property type="entry name" value="Transc_reg_CodY_N"/>
</dbReference>
<dbReference type="InterPro" id="IPR036388">
    <property type="entry name" value="WH-like_DNA-bd_sf"/>
</dbReference>
<dbReference type="InterPro" id="IPR036390">
    <property type="entry name" value="WH_DNA-bd_sf"/>
</dbReference>
<dbReference type="NCBIfam" id="TIGR02787">
    <property type="entry name" value="codY_Gpos"/>
    <property type="match status" value="1"/>
</dbReference>
<dbReference type="NCBIfam" id="NF003170">
    <property type="entry name" value="PRK04158.1"/>
    <property type="match status" value="1"/>
</dbReference>
<dbReference type="PANTHER" id="PTHR40062:SF1">
    <property type="entry name" value="GLOBAL TRANSCRIPTIONAL REGULATOR CODY"/>
    <property type="match status" value="1"/>
</dbReference>
<dbReference type="PANTHER" id="PTHR40062">
    <property type="entry name" value="GTP-SENSING TRANSCRIPTIONAL PLEIOTROPIC REPRESSOR CODY"/>
    <property type="match status" value="1"/>
</dbReference>
<dbReference type="Pfam" id="PF06018">
    <property type="entry name" value="CodY"/>
    <property type="match status" value="1"/>
</dbReference>
<dbReference type="Pfam" id="PF08222">
    <property type="entry name" value="HTH_CodY"/>
    <property type="match status" value="1"/>
</dbReference>
<dbReference type="PIRSF" id="PIRSF011572">
    <property type="entry name" value="GTP_sensing_CodY"/>
    <property type="match status" value="1"/>
</dbReference>
<dbReference type="SUPFAM" id="SSF46785">
    <property type="entry name" value="Winged helix' DNA-binding domain"/>
    <property type="match status" value="1"/>
</dbReference>
<feature type="chain" id="PRO_1000051548" description="Global transcriptional regulator CodY">
    <location>
        <begin position="1"/>
        <end position="262"/>
    </location>
</feature>
<feature type="DNA-binding region" description="H-T-H motif" evidence="1">
    <location>
        <begin position="207"/>
        <end position="226"/>
    </location>
</feature>
<feature type="region of interest" description="GAF domain" evidence="1">
    <location>
        <begin position="1"/>
        <end position="159"/>
    </location>
</feature>
<name>CODY_STRP2</name>
<comment type="function">
    <text evidence="1">DNA-binding global transcriptional regulator which is involved in the adaptive response to starvation and acts by directly or indirectly controlling the expression of numerous genes in response to nutrient availability. During rapid exponential growth, CodY is highly active and represses genes whose products allow adaptation to nutrient depletion.</text>
</comment>
<comment type="function">
    <text evidence="2">Target genes are mainly involved in amino acid metabolism, biosynthesis and uptake, but also several other cellular processes, such as carbon metabolism and iron uptake (PubMed:18024519). Binds to a 15-bp recognition site, the CodY-box (PubMed:18024519). Additionally, in pathogenic bacteria, CodY also regulates virulence gene expression and provides a regulatory link between metabolism and pathogenesis (PubMed:18024519).</text>
</comment>
<comment type="activity regulation">
    <text evidence="2">Activity of CodY is modulated by interaction with the branched-chain amino acids (BCAAs) leucine, isoleucine and valine, which are signals of the nutritional status of the cell (PubMed:18024519). Whereas both BCAA and GTP are CodY effectors in B.subtilis, S.pneumoniae CodY responds to the intracellular BCAA concentrations, but not to physiological fluctuations in intracellular GTP (PubMed:18024519).</text>
</comment>
<comment type="subcellular location">
    <subcellularLocation>
        <location evidence="1">Cytoplasm</location>
    </subcellularLocation>
</comment>
<comment type="disruption phenotype">
    <text evidence="3">Essential, cannot be deleted.</text>
</comment>
<comment type="similarity">
    <text evidence="1">Belongs to the CodY family.</text>
</comment>
<comment type="caution">
    <text evidence="3">The disruption mutant used by Hendriksen et al for transcriptome analysis of the CodY regulon and for virulence studies contains additional mutations allowing survival of codY mutant cells (PubMed:20979332). Whole genome sequencing revealed additional mutations in fatC, which encodes a ferric iron permease, and amiC: this combination of mutations was confirmed to allow tolerance of codY inactivation (PubMed:20979332).</text>
</comment>
<evidence type="ECO:0000255" key="1">
    <source>
        <dbReference type="HAMAP-Rule" id="MF_00621"/>
    </source>
</evidence>
<evidence type="ECO:0000269" key="2">
    <source>
    </source>
</evidence>
<evidence type="ECO:0000269" key="3">
    <source>
    </source>
</evidence>
<evidence type="ECO:0000303" key="4">
    <source>
    </source>
</evidence>
<evidence type="ECO:0000305" key="5"/>
<accession>Q04JG7</accession>